<accession>Q4JXQ4</accession>
<dbReference type="EC" id="2.7.2.1" evidence="1"/>
<dbReference type="EMBL" id="CR931997">
    <property type="protein sequence ID" value="CAI36403.1"/>
    <property type="molecule type" value="Genomic_DNA"/>
</dbReference>
<dbReference type="RefSeq" id="WP_011272972.1">
    <property type="nucleotide sequence ID" value="NC_007164.1"/>
</dbReference>
<dbReference type="SMR" id="Q4JXQ4"/>
<dbReference type="STRING" id="306537.jk0251"/>
<dbReference type="KEGG" id="cjk:jk0251"/>
<dbReference type="PATRIC" id="fig|306537.10.peg.261"/>
<dbReference type="eggNOG" id="COG0282">
    <property type="taxonomic scope" value="Bacteria"/>
</dbReference>
<dbReference type="HOGENOM" id="CLU_020352_0_1_11"/>
<dbReference type="OrthoDB" id="9802453at2"/>
<dbReference type="UniPathway" id="UPA00340">
    <property type="reaction ID" value="UER00458"/>
</dbReference>
<dbReference type="Proteomes" id="UP000000545">
    <property type="component" value="Chromosome"/>
</dbReference>
<dbReference type="GO" id="GO:0005737">
    <property type="term" value="C:cytoplasm"/>
    <property type="evidence" value="ECO:0007669"/>
    <property type="project" value="UniProtKB-SubCell"/>
</dbReference>
<dbReference type="GO" id="GO:0008776">
    <property type="term" value="F:acetate kinase activity"/>
    <property type="evidence" value="ECO:0007669"/>
    <property type="project" value="UniProtKB-UniRule"/>
</dbReference>
<dbReference type="GO" id="GO:0005524">
    <property type="term" value="F:ATP binding"/>
    <property type="evidence" value="ECO:0007669"/>
    <property type="project" value="UniProtKB-KW"/>
</dbReference>
<dbReference type="GO" id="GO:0000287">
    <property type="term" value="F:magnesium ion binding"/>
    <property type="evidence" value="ECO:0007669"/>
    <property type="project" value="UniProtKB-UniRule"/>
</dbReference>
<dbReference type="GO" id="GO:0006083">
    <property type="term" value="P:acetate metabolic process"/>
    <property type="evidence" value="ECO:0007669"/>
    <property type="project" value="TreeGrafter"/>
</dbReference>
<dbReference type="GO" id="GO:0006085">
    <property type="term" value="P:acetyl-CoA biosynthetic process"/>
    <property type="evidence" value="ECO:0007669"/>
    <property type="project" value="UniProtKB-UniRule"/>
</dbReference>
<dbReference type="CDD" id="cd24010">
    <property type="entry name" value="ASKHA_NBD_AcK_PK"/>
    <property type="match status" value="1"/>
</dbReference>
<dbReference type="Gene3D" id="3.30.420.40">
    <property type="match status" value="2"/>
</dbReference>
<dbReference type="HAMAP" id="MF_00020">
    <property type="entry name" value="Acetate_kinase"/>
    <property type="match status" value="1"/>
</dbReference>
<dbReference type="InterPro" id="IPR004372">
    <property type="entry name" value="Ac/propionate_kinase"/>
</dbReference>
<dbReference type="InterPro" id="IPR000890">
    <property type="entry name" value="Aliphatic_acid_kin_short-chain"/>
</dbReference>
<dbReference type="InterPro" id="IPR023865">
    <property type="entry name" value="Aliphatic_acid_kinase_CS"/>
</dbReference>
<dbReference type="InterPro" id="IPR043129">
    <property type="entry name" value="ATPase_NBD"/>
</dbReference>
<dbReference type="NCBIfam" id="TIGR00016">
    <property type="entry name" value="ackA"/>
    <property type="match status" value="1"/>
</dbReference>
<dbReference type="PANTHER" id="PTHR21060">
    <property type="entry name" value="ACETATE KINASE"/>
    <property type="match status" value="1"/>
</dbReference>
<dbReference type="PANTHER" id="PTHR21060:SF15">
    <property type="entry name" value="ACETATE KINASE-RELATED"/>
    <property type="match status" value="1"/>
</dbReference>
<dbReference type="Pfam" id="PF00871">
    <property type="entry name" value="Acetate_kinase"/>
    <property type="match status" value="1"/>
</dbReference>
<dbReference type="PIRSF" id="PIRSF000722">
    <property type="entry name" value="Acetate_prop_kin"/>
    <property type="match status" value="1"/>
</dbReference>
<dbReference type="PRINTS" id="PR00471">
    <property type="entry name" value="ACETATEKNASE"/>
</dbReference>
<dbReference type="SUPFAM" id="SSF53067">
    <property type="entry name" value="Actin-like ATPase domain"/>
    <property type="match status" value="2"/>
</dbReference>
<dbReference type="PROSITE" id="PS01075">
    <property type="entry name" value="ACETATE_KINASE_1"/>
    <property type="match status" value="1"/>
</dbReference>
<dbReference type="PROSITE" id="PS01076">
    <property type="entry name" value="ACETATE_KINASE_2"/>
    <property type="match status" value="1"/>
</dbReference>
<organism>
    <name type="scientific">Corynebacterium jeikeium (strain K411)</name>
    <dbReference type="NCBI Taxonomy" id="306537"/>
    <lineage>
        <taxon>Bacteria</taxon>
        <taxon>Bacillati</taxon>
        <taxon>Actinomycetota</taxon>
        <taxon>Actinomycetes</taxon>
        <taxon>Mycobacteriales</taxon>
        <taxon>Corynebacteriaceae</taxon>
        <taxon>Corynebacterium</taxon>
    </lineage>
</organism>
<comment type="function">
    <text evidence="1">Catalyzes the formation of acetyl phosphate from acetate and ATP. Can also catalyze the reverse reaction.</text>
</comment>
<comment type="catalytic activity">
    <reaction evidence="1">
        <text>acetate + ATP = acetyl phosphate + ADP</text>
        <dbReference type="Rhea" id="RHEA:11352"/>
        <dbReference type="ChEBI" id="CHEBI:22191"/>
        <dbReference type="ChEBI" id="CHEBI:30089"/>
        <dbReference type="ChEBI" id="CHEBI:30616"/>
        <dbReference type="ChEBI" id="CHEBI:456216"/>
        <dbReference type="EC" id="2.7.2.1"/>
    </reaction>
</comment>
<comment type="cofactor">
    <cofactor evidence="1">
        <name>Mg(2+)</name>
        <dbReference type="ChEBI" id="CHEBI:18420"/>
    </cofactor>
    <cofactor evidence="1">
        <name>Mn(2+)</name>
        <dbReference type="ChEBI" id="CHEBI:29035"/>
    </cofactor>
    <text evidence="1">Mg(2+). Can also accept Mn(2+).</text>
</comment>
<comment type="pathway">
    <text evidence="1">Metabolic intermediate biosynthesis; acetyl-CoA biosynthesis; acetyl-CoA from acetate: step 1/2.</text>
</comment>
<comment type="subunit">
    <text evidence="1">Homodimer.</text>
</comment>
<comment type="subcellular location">
    <subcellularLocation>
        <location evidence="1">Cytoplasm</location>
    </subcellularLocation>
</comment>
<comment type="similarity">
    <text evidence="1">Belongs to the acetokinase family.</text>
</comment>
<feature type="chain" id="PRO_1000002226" description="Acetate kinase">
    <location>
        <begin position="1"/>
        <end position="403"/>
    </location>
</feature>
<feature type="active site" description="Proton donor/acceptor" evidence="1">
    <location>
        <position position="150"/>
    </location>
</feature>
<feature type="binding site" evidence="1">
    <location>
        <position position="9"/>
    </location>
    <ligand>
        <name>Mg(2+)</name>
        <dbReference type="ChEBI" id="CHEBI:18420"/>
    </ligand>
</feature>
<feature type="binding site" evidence="1">
    <location>
        <position position="16"/>
    </location>
    <ligand>
        <name>ATP</name>
        <dbReference type="ChEBI" id="CHEBI:30616"/>
    </ligand>
</feature>
<feature type="binding site" evidence="1">
    <location>
        <position position="93"/>
    </location>
    <ligand>
        <name>substrate</name>
    </ligand>
</feature>
<feature type="binding site" evidence="1">
    <location>
        <begin position="210"/>
        <end position="214"/>
    </location>
    <ligand>
        <name>ATP</name>
        <dbReference type="ChEBI" id="CHEBI:30616"/>
    </ligand>
</feature>
<feature type="binding site" evidence="1">
    <location>
        <begin position="284"/>
        <end position="286"/>
    </location>
    <ligand>
        <name>ATP</name>
        <dbReference type="ChEBI" id="CHEBI:30616"/>
    </ligand>
</feature>
<feature type="binding site" evidence="1">
    <location>
        <begin position="332"/>
        <end position="336"/>
    </location>
    <ligand>
        <name>ATP</name>
        <dbReference type="ChEBI" id="CHEBI:30616"/>
    </ligand>
</feature>
<feature type="binding site" evidence="1">
    <location>
        <position position="388"/>
    </location>
    <ligand>
        <name>Mg(2+)</name>
        <dbReference type="ChEBI" id="CHEBI:18420"/>
    </ligand>
</feature>
<feature type="site" description="Transition state stabilizer" evidence="1">
    <location>
        <position position="182"/>
    </location>
</feature>
<feature type="site" description="Transition state stabilizer" evidence="1">
    <location>
        <position position="243"/>
    </location>
</feature>
<keyword id="KW-0067">ATP-binding</keyword>
<keyword id="KW-0963">Cytoplasm</keyword>
<keyword id="KW-0418">Kinase</keyword>
<keyword id="KW-0460">Magnesium</keyword>
<keyword id="KW-0479">Metal-binding</keyword>
<keyword id="KW-0547">Nucleotide-binding</keyword>
<keyword id="KW-1185">Reference proteome</keyword>
<keyword id="KW-0808">Transferase</keyword>
<proteinExistence type="inferred from homology"/>
<name>ACKA_CORJK</name>
<sequence length="403" mass="43402">MTKYVLVLNSGSSSIKFQVLDPEANATADPFVSGIVEKIGEKKGHIQIQTETSKMEDNRPILSHSVGLERAFGMMTLLGVGPQDLDLVAAGHRVVHGGATFTEPVLIDDEVIEQLKELIPLAPLHNPANIDGIENARALLEHVPHVAVFDTAFFSTLPEHAANYAIKKDIADEYNIRRYGFHGTSHEYVSSKVPDLLGKPAEEVNQITLHLGNGASAAAIRGGEAVDTTMGLTPLAGLVMGTRSGDIDPGIIFHLARSGGMTVDQADKLLNRESGLKGMAGVNDFRELKTLIEDGDENAQLAYDVYIHALRRFIGSYMLILGGVDAIVFTAGVGENAVQVRRDAMADLQNFGIEIDDARNENSEGIVGAREISTDDSTVKVFVVPTNEELAIARQATELAEQQ</sequence>
<reference key="1">
    <citation type="journal article" date="2005" name="J. Bacteriol.">
        <title>Complete genome sequence and analysis of the multiresistant nosocomial pathogen Corynebacterium jeikeium K411, a lipid-requiring bacterium of the human skin flora.</title>
        <authorList>
            <person name="Tauch A."/>
            <person name="Kaiser O."/>
            <person name="Hain T."/>
            <person name="Goesmann A."/>
            <person name="Weisshaar B."/>
            <person name="Albersmeier A."/>
            <person name="Bekel T."/>
            <person name="Bischoff N."/>
            <person name="Brune I."/>
            <person name="Chakraborty T."/>
            <person name="Kalinowski J."/>
            <person name="Meyer F."/>
            <person name="Rupp O."/>
            <person name="Schneiker S."/>
            <person name="Viehoever P."/>
            <person name="Puehler A."/>
        </authorList>
    </citation>
    <scope>NUCLEOTIDE SEQUENCE [LARGE SCALE GENOMIC DNA]</scope>
    <source>
        <strain>K411</strain>
    </source>
</reference>
<evidence type="ECO:0000255" key="1">
    <source>
        <dbReference type="HAMAP-Rule" id="MF_00020"/>
    </source>
</evidence>
<gene>
    <name evidence="1" type="primary">ackA</name>
    <name type="ordered locus">jk0251</name>
</gene>
<protein>
    <recommendedName>
        <fullName evidence="1">Acetate kinase</fullName>
        <ecNumber evidence="1">2.7.2.1</ecNumber>
    </recommendedName>
    <alternativeName>
        <fullName evidence="1">Acetokinase</fullName>
    </alternativeName>
</protein>